<proteinExistence type="evidence at transcript level"/>
<keyword id="KW-0472">Membrane</keyword>
<keyword id="KW-0496">Mitochondrion</keyword>
<keyword id="KW-0999">Mitochondrion inner membrane</keyword>
<keyword id="KW-1185">Reference proteome</keyword>
<keyword id="KW-0809">Transit peptide</keyword>
<sequence length="247" mass="28144">MAASTATRFSGLGARSFSDFVGLATFQGLRGCRSRAHRHPIRHLASCGIVMTRTSKRAVQDIGSPCIQQCRSFLSFTGPLTNKRKEYSERRIMGYSMQEMYEVVSNVEEYKLFVPWCKKSTVISKRTGYAKAQLEVGFPPILERYTSILTLVRPHLVKAVCTDGRLFNHLESIWRFSPGIPGYPRTCTVDFSISFEFRSLLHSQLATVFFDEVVKQMVAAFERRAGKIYGPETPIPRELMYHEIHQT</sequence>
<organism>
    <name type="scientific">Xenopus laevis</name>
    <name type="common">African clawed frog</name>
    <dbReference type="NCBI Taxonomy" id="8355"/>
    <lineage>
        <taxon>Eukaryota</taxon>
        <taxon>Metazoa</taxon>
        <taxon>Chordata</taxon>
        <taxon>Craniata</taxon>
        <taxon>Vertebrata</taxon>
        <taxon>Euteleostomi</taxon>
        <taxon>Amphibia</taxon>
        <taxon>Batrachia</taxon>
        <taxon>Anura</taxon>
        <taxon>Pipoidea</taxon>
        <taxon>Pipidae</taxon>
        <taxon>Xenopodinae</taxon>
        <taxon>Xenopus</taxon>
        <taxon>Xenopus</taxon>
    </lineage>
</organism>
<accession>Q6DFA6</accession>
<comment type="function">
    <text evidence="1">Required for the function of coenzyme Q in the respiratory chain. May serve as a chaperone or may be involved in the transport of Q6 from its site of synthesis to the catalytic sites of the respiratory complexes (By similarity).</text>
</comment>
<comment type="subunit">
    <text evidence="1">Interacts with coenzyme Q.</text>
</comment>
<comment type="subcellular location">
    <subcellularLocation>
        <location evidence="1">Mitochondrion inner membrane</location>
        <topology evidence="1">Peripheral membrane protein</topology>
        <orientation evidence="1">Matrix side</orientation>
    </subcellularLocation>
</comment>
<comment type="similarity">
    <text evidence="3">Belongs to the COQ10 family.</text>
</comment>
<dbReference type="EMBL" id="BC076834">
    <property type="protein sequence ID" value="AAH76834.1"/>
    <property type="molecule type" value="mRNA"/>
</dbReference>
<dbReference type="RefSeq" id="NP_001086581.1">
    <property type="nucleotide sequence ID" value="NM_001093112.1"/>
</dbReference>
<dbReference type="SMR" id="Q6DFA6"/>
<dbReference type="DNASU" id="446416"/>
<dbReference type="GeneID" id="446416"/>
<dbReference type="KEGG" id="xla:446416"/>
<dbReference type="AGR" id="Xenbase:XB-GENE-5803067"/>
<dbReference type="CTD" id="446416"/>
<dbReference type="Xenbase" id="XB-GENE-5803067">
    <property type="gene designation" value="coq10a.L"/>
</dbReference>
<dbReference type="OMA" id="GCQRQNI"/>
<dbReference type="OrthoDB" id="292693at2759"/>
<dbReference type="Proteomes" id="UP000186698">
    <property type="component" value="Chromosome 2L"/>
</dbReference>
<dbReference type="Bgee" id="446416">
    <property type="expression patterns" value="Expressed in egg cell and 19 other cell types or tissues"/>
</dbReference>
<dbReference type="GO" id="GO:0005743">
    <property type="term" value="C:mitochondrial inner membrane"/>
    <property type="evidence" value="ECO:0007669"/>
    <property type="project" value="UniProtKB-SubCell"/>
</dbReference>
<dbReference type="GO" id="GO:0005739">
    <property type="term" value="C:mitochondrion"/>
    <property type="evidence" value="ECO:0000318"/>
    <property type="project" value="GO_Central"/>
</dbReference>
<dbReference type="GO" id="GO:0048039">
    <property type="term" value="F:ubiquinone binding"/>
    <property type="evidence" value="ECO:0007669"/>
    <property type="project" value="InterPro"/>
</dbReference>
<dbReference type="GO" id="GO:0045333">
    <property type="term" value="P:cellular respiration"/>
    <property type="evidence" value="ECO:0007669"/>
    <property type="project" value="InterPro"/>
</dbReference>
<dbReference type="CDD" id="cd07813">
    <property type="entry name" value="COQ10p_like"/>
    <property type="match status" value="1"/>
</dbReference>
<dbReference type="FunFam" id="3.30.530.20:FF:000002">
    <property type="entry name" value="Coenzyme Q-binding protein COQ10 homolog, mitochondrial"/>
    <property type="match status" value="1"/>
</dbReference>
<dbReference type="Gene3D" id="3.30.530.20">
    <property type="match status" value="1"/>
</dbReference>
<dbReference type="InterPro" id="IPR044996">
    <property type="entry name" value="COQ10-like"/>
</dbReference>
<dbReference type="InterPro" id="IPR005031">
    <property type="entry name" value="COQ10_START"/>
</dbReference>
<dbReference type="InterPro" id="IPR023393">
    <property type="entry name" value="START-like_dom_sf"/>
</dbReference>
<dbReference type="PANTHER" id="PTHR12901:SF8">
    <property type="entry name" value="COENZYME Q-BINDING PROTEIN COQ10 HOMOLOG A, MITOCHONDRIAL"/>
    <property type="match status" value="1"/>
</dbReference>
<dbReference type="PANTHER" id="PTHR12901">
    <property type="entry name" value="SPERM PROTEIN HOMOLOG"/>
    <property type="match status" value="1"/>
</dbReference>
<dbReference type="Pfam" id="PF03364">
    <property type="entry name" value="Polyketide_cyc"/>
    <property type="match status" value="1"/>
</dbReference>
<dbReference type="SUPFAM" id="SSF55961">
    <property type="entry name" value="Bet v1-like"/>
    <property type="match status" value="1"/>
</dbReference>
<feature type="transit peptide" description="Mitochondrion" evidence="2">
    <location>
        <begin position="1"/>
        <end position="80"/>
    </location>
</feature>
<feature type="chain" id="PRO_0000228646" description="Coenzyme Q-binding protein COQ10 homolog A, mitochondrial">
    <location>
        <begin position="81"/>
        <end position="247"/>
    </location>
</feature>
<name>CQ10A_XENLA</name>
<reference key="1">
    <citation type="submission" date="2004-07" db="EMBL/GenBank/DDBJ databases">
        <authorList>
            <consortium name="NIH - Xenopus Gene Collection (XGC) project"/>
        </authorList>
    </citation>
    <scope>NUCLEOTIDE SEQUENCE [LARGE SCALE MRNA]</scope>
    <source>
        <tissue>Oocyte</tissue>
    </source>
</reference>
<evidence type="ECO:0000250" key="1"/>
<evidence type="ECO:0000255" key="2"/>
<evidence type="ECO:0000305" key="3"/>
<gene>
    <name type="primary">coq10b-a</name>
</gene>
<protein>
    <recommendedName>
        <fullName>Coenzyme Q-binding protein COQ10 homolog A, mitochondrial</fullName>
    </recommendedName>
</protein>